<reference evidence="10 13" key="1">
    <citation type="journal article" date="2006" name="Development">
        <title>Characterization and function of the bHLH-O protein XHes2: insight into the mechanisms controlling retinal cell fate decision.</title>
        <authorList>
            <person name="Soelter M."/>
            <person name="Locker M."/>
            <person name="Boy S."/>
            <person name="Taelman V."/>
            <person name="Bellefroid E.J."/>
            <person name="Perron M."/>
            <person name="Pieler T."/>
        </authorList>
    </citation>
    <scope>NUCLEOTIDE SEQUENCE [MRNA]</scope>
    <scope>FUNCTION</scope>
    <scope>HOMODIMERIZATION</scope>
    <scope>INTERACTION WITH NEUROD1; NEUROD4; HES1 AND HES6R</scope>
    <scope>DEVELOPMENTAL STAGE</scope>
    <scope>INDUCTION</scope>
    <source>
        <tissue evidence="8">Oocyte</tissue>
    </source>
</reference>
<reference evidence="11" key="2">
    <citation type="submission" date="2005-04" db="EMBL/GenBank/DDBJ databases">
        <authorList>
            <consortium name="NIH - Xenopus Gene Collection (XGC) project"/>
        </authorList>
    </citation>
    <scope>NUCLEOTIDE SEQUENCE [LARGE SCALE MRNA]</scope>
    <source>
        <tissue evidence="12">Brain</tissue>
        <tissue evidence="11">Kidney</tissue>
    </source>
</reference>
<reference key="3">
    <citation type="journal article" date="2004" name="Dev. Biol.">
        <title>Sequences downstream of the bHLH domain of the Xenopus hairy-related transcription factor-1 act as an extended dimerization domain that contributes to the selection of the partners.</title>
        <authorList>
            <person name="Taelman V."/>
            <person name="Van Wayenbergh R."/>
            <person name="Soelter M."/>
            <person name="Pichon B."/>
            <person name="Pieler T."/>
            <person name="Christophe D."/>
            <person name="Bellefroid E.J."/>
        </authorList>
    </citation>
    <scope>INTERACTION WITH HEY1</scope>
</reference>
<comment type="function">
    <text evidence="8">Transcriptional repressor. Essential in the retina to govern glial versus neuronal differentiation. Promotes gliogenesis through the inhibition of neuronal differentiation by at least two distinct mechanisms; represses proneural gene transcription, and also physically interacts with proneural proteins, including neurod1.</text>
</comment>
<comment type="subunit">
    <text evidence="1 7 8">Transcription repression requires formation of a complex with a corepressor protein of the Groucho/TLE family (By similarity). Homodimer, and heterodimer with the other bHLH proteins neurod1, neurod4/ath3, hes1/hairy1 and hes6r. Weakly interacts with the bHLH protein hey1/hrt1.</text>
</comment>
<comment type="subcellular location">
    <subcellularLocation>
        <location evidence="2 5">Nucleus</location>
    </subcellularLocation>
</comment>
<comment type="tissue specificity">
    <text evidence="8">Expressed in the animal half of the early cleavage stage embryo. During neurulation and organogenesis, the otic vesicles and retina are the main sites of expression; expression in otic placodes begins as early as stage 13.5, persisting in the otic vesicles at stage 30 and beyond. Also transiently expressed in the olfactory placodes. In addition, weakly expressed in primary neurons. Expression in the retina begins at stage 21, and is seen throughout the neural retina by stage 30. From stage 35 onwards, expression progressively declines in the central retina, while remaining high in the margins. At stage 41, expression becomes restricted to the ciliary marginal zone (CMZ) of the retina, the only region where retinogenesis is still occurring.</text>
</comment>
<comment type="developmental stage">
    <text evidence="8">Expressed both maternally and zygotically.</text>
</comment>
<comment type="induction">
    <text evidence="8">Differentially regulated in the ectoderm and neuroectoderm by notch and neurog2/ngnr1.</text>
</comment>
<comment type="domain">
    <text evidence="3">Has a particular type of basic domain (presence of a helix-interrupting proline) that binds to the N-box (CACNAG), rather than the canonical E-box (CANNTG).</text>
</comment>
<comment type="domain">
    <text evidence="1">The C-terminal WRPW motif is a transcriptional repression domain necessary for the interaction with Groucho/TLE family members, transcriptional corepressors recruited to specific target DNA by Hairy-related proteins.</text>
</comment>
<comment type="sequence caution" evidence="10">
    <conflict type="erroneous initiation">
        <sequence resource="EMBL-CDS" id="AAH84134"/>
    </conflict>
</comment>
<comment type="sequence caution" evidence="10">
    <conflict type="erroneous initiation">
        <sequence resource="EMBL-CDS" id="AAH92348"/>
    </conflict>
</comment>
<accession>Q00P32</accession>
<accession>Q5XHC4</accession>
<protein>
    <recommendedName>
        <fullName evidence="2 9">Transcription factor HES-2</fullName>
        <shortName evidence="2 9">XHes2</shortName>
    </recommendedName>
    <alternativeName>
        <fullName evidence="9">Hairy and enhancer of split 2</fullName>
    </alternativeName>
</protein>
<dbReference type="EMBL" id="DQ156231">
    <property type="protein sequence ID" value="ABA40833.1"/>
    <property type="molecule type" value="mRNA"/>
</dbReference>
<dbReference type="EMBL" id="BC084134">
    <property type="protein sequence ID" value="AAH84134.1"/>
    <property type="status" value="ALT_INIT"/>
    <property type="molecule type" value="mRNA"/>
</dbReference>
<dbReference type="EMBL" id="BC092348">
    <property type="protein sequence ID" value="AAH92348.1"/>
    <property type="status" value="ALT_INIT"/>
    <property type="molecule type" value="mRNA"/>
</dbReference>
<dbReference type="RefSeq" id="NP_001116354.1">
    <property type="nucleotide sequence ID" value="NM_001122882.1"/>
</dbReference>
<dbReference type="SMR" id="Q00P32"/>
<dbReference type="GeneID" id="495039"/>
<dbReference type="KEGG" id="xla:495039"/>
<dbReference type="AGR" id="Xenbase:XB-GENE-865581"/>
<dbReference type="CTD" id="495039"/>
<dbReference type="Xenbase" id="XB-GENE-865581">
    <property type="gene designation" value="hes2.L"/>
</dbReference>
<dbReference type="OMA" id="DSMHNYQ"/>
<dbReference type="OrthoDB" id="6085656at2759"/>
<dbReference type="Proteomes" id="UP000186698">
    <property type="component" value="Chromosome 7L"/>
</dbReference>
<dbReference type="Bgee" id="495039">
    <property type="expression patterns" value="Expressed in egg cell and 9 other cell types or tissues"/>
</dbReference>
<dbReference type="GO" id="GO:0005634">
    <property type="term" value="C:nucleus"/>
    <property type="evidence" value="ECO:0000250"/>
    <property type="project" value="UniProtKB"/>
</dbReference>
<dbReference type="GO" id="GO:0043425">
    <property type="term" value="F:bHLH transcription factor binding"/>
    <property type="evidence" value="ECO:0000353"/>
    <property type="project" value="UniProtKB"/>
</dbReference>
<dbReference type="GO" id="GO:0046982">
    <property type="term" value="F:protein heterodimerization activity"/>
    <property type="evidence" value="ECO:0000353"/>
    <property type="project" value="UniProtKB"/>
</dbReference>
<dbReference type="GO" id="GO:0042803">
    <property type="term" value="F:protein homodimerization activity"/>
    <property type="evidence" value="ECO:0000353"/>
    <property type="project" value="UniProtKB"/>
</dbReference>
<dbReference type="GO" id="GO:0000978">
    <property type="term" value="F:RNA polymerase II cis-regulatory region sequence-specific DNA binding"/>
    <property type="evidence" value="ECO:0000318"/>
    <property type="project" value="GO_Central"/>
</dbReference>
<dbReference type="GO" id="GO:0030154">
    <property type="term" value="P:cell differentiation"/>
    <property type="evidence" value="ECO:0007669"/>
    <property type="project" value="UniProtKB-KW"/>
</dbReference>
<dbReference type="GO" id="GO:0045892">
    <property type="term" value="P:negative regulation of DNA-templated transcription"/>
    <property type="evidence" value="ECO:0000315"/>
    <property type="project" value="UniProtKB"/>
</dbReference>
<dbReference type="GO" id="GO:0050768">
    <property type="term" value="P:negative regulation of neurogenesis"/>
    <property type="evidence" value="ECO:0000315"/>
    <property type="project" value="UniProtKB"/>
</dbReference>
<dbReference type="GO" id="GO:0000122">
    <property type="term" value="P:negative regulation of transcription by RNA polymerase II"/>
    <property type="evidence" value="ECO:0000315"/>
    <property type="project" value="UniProtKB"/>
</dbReference>
<dbReference type="GO" id="GO:0007399">
    <property type="term" value="P:nervous system development"/>
    <property type="evidence" value="ECO:0007669"/>
    <property type="project" value="UniProtKB-KW"/>
</dbReference>
<dbReference type="GO" id="GO:0014015">
    <property type="term" value="P:positive regulation of gliogenesis"/>
    <property type="evidence" value="ECO:0000315"/>
    <property type="project" value="UniProtKB"/>
</dbReference>
<dbReference type="GO" id="GO:0050767">
    <property type="term" value="P:regulation of neurogenesis"/>
    <property type="evidence" value="ECO:0000318"/>
    <property type="project" value="GO_Central"/>
</dbReference>
<dbReference type="GO" id="GO:0060042">
    <property type="term" value="P:retina morphogenesis in camera-type eye"/>
    <property type="evidence" value="ECO:0000315"/>
    <property type="project" value="UniProtKB"/>
</dbReference>
<dbReference type="CDD" id="cd11463">
    <property type="entry name" value="bHLH-O_HES2"/>
    <property type="match status" value="1"/>
</dbReference>
<dbReference type="FunFam" id="4.10.280.10:FF:000009">
    <property type="entry name" value="Transcription factor HES-1"/>
    <property type="match status" value="1"/>
</dbReference>
<dbReference type="Gene3D" id="4.10.280.10">
    <property type="entry name" value="Helix-loop-helix DNA-binding domain"/>
    <property type="match status" value="1"/>
</dbReference>
<dbReference type="InterPro" id="IPR011598">
    <property type="entry name" value="bHLH_dom"/>
</dbReference>
<dbReference type="InterPro" id="IPR050370">
    <property type="entry name" value="HES_HEY"/>
</dbReference>
<dbReference type="InterPro" id="IPR036638">
    <property type="entry name" value="HLH_DNA-bd_sf"/>
</dbReference>
<dbReference type="PANTHER" id="PTHR10985">
    <property type="entry name" value="BASIC HELIX-LOOP-HELIX TRANSCRIPTION FACTOR, HES-RELATED"/>
    <property type="match status" value="1"/>
</dbReference>
<dbReference type="Pfam" id="PF00010">
    <property type="entry name" value="HLH"/>
    <property type="match status" value="1"/>
</dbReference>
<dbReference type="SMART" id="SM00353">
    <property type="entry name" value="HLH"/>
    <property type="match status" value="1"/>
</dbReference>
<dbReference type="SUPFAM" id="SSF47459">
    <property type="entry name" value="HLH, helix-loop-helix DNA-binding domain"/>
    <property type="match status" value="1"/>
</dbReference>
<dbReference type="PROSITE" id="PS50888">
    <property type="entry name" value="BHLH"/>
    <property type="match status" value="1"/>
</dbReference>
<organism>
    <name type="scientific">Xenopus laevis</name>
    <name type="common">African clawed frog</name>
    <dbReference type="NCBI Taxonomy" id="8355"/>
    <lineage>
        <taxon>Eukaryota</taxon>
        <taxon>Metazoa</taxon>
        <taxon>Chordata</taxon>
        <taxon>Craniata</taxon>
        <taxon>Vertebrata</taxon>
        <taxon>Euteleostomi</taxon>
        <taxon>Amphibia</taxon>
        <taxon>Batrachia</taxon>
        <taxon>Anura</taxon>
        <taxon>Pipoidea</taxon>
        <taxon>Pipidae</taxon>
        <taxon>Xenopodinae</taxon>
        <taxon>Xenopus</taxon>
        <taxon>Xenopus</taxon>
    </lineage>
</organism>
<evidence type="ECO:0000250" key="1"/>
<evidence type="ECO:0000250" key="2">
    <source>
        <dbReference type="UniProtKB" id="O54792"/>
    </source>
</evidence>
<evidence type="ECO:0000250" key="3">
    <source>
        <dbReference type="UniProtKB" id="P14003"/>
    </source>
</evidence>
<evidence type="ECO:0000255" key="4"/>
<evidence type="ECO:0000255" key="5">
    <source>
        <dbReference type="PROSITE-ProRule" id="PRU00981"/>
    </source>
</evidence>
<evidence type="ECO:0000256" key="6">
    <source>
        <dbReference type="SAM" id="MobiDB-lite"/>
    </source>
</evidence>
<evidence type="ECO:0000269" key="7">
    <source>
    </source>
</evidence>
<evidence type="ECO:0000269" key="8">
    <source>
    </source>
</evidence>
<evidence type="ECO:0000303" key="9">
    <source>
    </source>
</evidence>
<evidence type="ECO:0000305" key="10"/>
<evidence type="ECO:0000312" key="11">
    <source>
        <dbReference type="EMBL" id="AAH84134.1"/>
    </source>
</evidence>
<evidence type="ECO:0000312" key="12">
    <source>
        <dbReference type="EMBL" id="AAH92348.1"/>
    </source>
</evidence>
<evidence type="ECO:0000312" key="13">
    <source>
        <dbReference type="EMBL" id="ABA40833.1"/>
    </source>
</evidence>
<gene>
    <name type="primary">hes2</name>
</gene>
<sequence length="191" mass="21823">MAPNVALADSMHNYQPKPGKRNQEASELRKTLKPLMEKRRRARINESLNQLKTLILPLIGKDNSRYSKLEKADILEMTVRFLRDIPPVQAQNQADRYKEGYRACVERLSAILGKSHVLTGEASNRLLEYLQRSPELCSSDCNHPPKPQRPRIVLQVSPRTSQFGSPLQNQPSSHRPAPCPPQLNSSIWRPW</sequence>
<name>HES2_XENLA</name>
<proteinExistence type="evidence at protein level"/>
<feature type="chain" id="PRO_0000370232" description="Transcription factor HES-2">
    <location>
        <begin position="1"/>
        <end position="191"/>
    </location>
</feature>
<feature type="domain" description="bHLH" evidence="5">
    <location>
        <begin position="28"/>
        <end position="85"/>
    </location>
</feature>
<feature type="domain" description="Orange" evidence="4">
    <location>
        <begin position="97"/>
        <end position="130"/>
    </location>
</feature>
<feature type="region of interest" description="Disordered" evidence="6">
    <location>
        <begin position="1"/>
        <end position="26"/>
    </location>
</feature>
<feature type="region of interest" description="Disordered" evidence="6">
    <location>
        <begin position="159"/>
        <end position="191"/>
    </location>
</feature>
<feature type="short sequence motif" description="WRPW motif" evidence="4">
    <location>
        <begin position="188"/>
        <end position="191"/>
    </location>
</feature>
<feature type="compositionally biased region" description="Polar residues" evidence="6">
    <location>
        <begin position="159"/>
        <end position="173"/>
    </location>
</feature>
<feature type="compositionally biased region" description="Polar residues" evidence="6">
    <location>
        <begin position="182"/>
        <end position="191"/>
    </location>
</feature>
<feature type="sequence conflict" description="In Ref. 1; ABA40833." evidence="10" ref="1">
    <original>Q</original>
    <variation>P</variation>
    <location>
        <position position="93"/>
    </location>
</feature>
<keyword id="KW-0217">Developmental protein</keyword>
<keyword id="KW-0221">Differentiation</keyword>
<keyword id="KW-0238">DNA-binding</keyword>
<keyword id="KW-0524">Neurogenesis</keyword>
<keyword id="KW-0539">Nucleus</keyword>
<keyword id="KW-1185">Reference proteome</keyword>
<keyword id="KW-0678">Repressor</keyword>
<keyword id="KW-0804">Transcription</keyword>
<keyword id="KW-0805">Transcription regulation</keyword>